<proteinExistence type="inferred from homology"/>
<keyword id="KW-0150">Chloroplast</keyword>
<keyword id="KW-0472">Membrane</keyword>
<keyword id="KW-0602">Photosynthesis</keyword>
<keyword id="KW-0604">Photosystem II</keyword>
<keyword id="KW-0934">Plastid</keyword>
<keyword id="KW-0793">Thylakoid</keyword>
<sequence>MAVIQFIKGINETVVADVSLTRSRDGSKGTATFRFNNPDILKSGMEDKGDITGMYLKDDEGELMTRDVSAKFINGKPQAVEAIYIIKSPQEWDRFMRFMEKYANENKLSFTKAK</sequence>
<accession>Q6B8Z7</accession>
<reference key="1">
    <citation type="journal article" date="2004" name="J. Mol. Evol.">
        <title>Comparative analysis of the complete plastid genome sequence of the red alga Gracilaria tenuistipitata var. liui provides insights into the evolution of rhodoplasts and their relationship to other plastids.</title>
        <authorList>
            <person name="Hagopian J.C."/>
            <person name="Reis M."/>
            <person name="Kitajima J.P."/>
            <person name="Bhattacharya D."/>
            <person name="de Oliveira M.C."/>
        </authorList>
    </citation>
    <scope>NUCLEOTIDE SEQUENCE [LARGE SCALE GENOMIC DNA]</scope>
</reference>
<dbReference type="EMBL" id="AY673996">
    <property type="protein sequence ID" value="AAT79638.1"/>
    <property type="molecule type" value="Genomic_DNA"/>
</dbReference>
<dbReference type="RefSeq" id="YP_063563.1">
    <property type="nucleotide sequence ID" value="NC_006137.1"/>
</dbReference>
<dbReference type="SMR" id="Q6B8Z7"/>
<dbReference type="GeneID" id="2943997"/>
<dbReference type="GO" id="GO:0009535">
    <property type="term" value="C:chloroplast thylakoid membrane"/>
    <property type="evidence" value="ECO:0007669"/>
    <property type="project" value="UniProtKB-SubCell"/>
</dbReference>
<dbReference type="GO" id="GO:0009523">
    <property type="term" value="C:photosystem II"/>
    <property type="evidence" value="ECO:0007669"/>
    <property type="project" value="UniProtKB-KW"/>
</dbReference>
<dbReference type="GO" id="GO:0015979">
    <property type="term" value="P:photosynthesis"/>
    <property type="evidence" value="ECO:0007669"/>
    <property type="project" value="UniProtKB-UniRule"/>
</dbReference>
<dbReference type="Gene3D" id="2.40.30.220">
    <property type="entry name" value="Photosystem II Psb28"/>
    <property type="match status" value="1"/>
</dbReference>
<dbReference type="HAMAP" id="MF_01370">
    <property type="entry name" value="PSII_Psb28"/>
    <property type="match status" value="1"/>
</dbReference>
<dbReference type="InterPro" id="IPR038676">
    <property type="entry name" value="Psb28_c1_sf"/>
</dbReference>
<dbReference type="InterPro" id="IPR005610">
    <property type="entry name" value="PSII_Psb28_class-1"/>
</dbReference>
<dbReference type="NCBIfam" id="TIGR03047">
    <property type="entry name" value="PS_II_psb28"/>
    <property type="match status" value="1"/>
</dbReference>
<dbReference type="PANTHER" id="PTHR34963">
    <property type="match status" value="1"/>
</dbReference>
<dbReference type="PANTHER" id="PTHR34963:SF2">
    <property type="entry name" value="PHOTOSYSTEM II REACTION CENTER PSB28 PROTEIN, CHLOROPLASTIC"/>
    <property type="match status" value="1"/>
</dbReference>
<dbReference type="Pfam" id="PF03912">
    <property type="entry name" value="Psb28"/>
    <property type="match status" value="1"/>
</dbReference>
<evidence type="ECO:0000255" key="1">
    <source>
        <dbReference type="HAMAP-Rule" id="MF_01370"/>
    </source>
</evidence>
<feature type="chain" id="PRO_0000271557" description="Photosystem II reaction center Psb28 protein">
    <location>
        <begin position="1"/>
        <end position="114"/>
    </location>
</feature>
<organism>
    <name type="scientific">Gracilaria tenuistipitata var. liui</name>
    <name type="common">Red alga</name>
    <dbReference type="NCBI Taxonomy" id="285951"/>
    <lineage>
        <taxon>Eukaryota</taxon>
        <taxon>Rhodophyta</taxon>
        <taxon>Florideophyceae</taxon>
        <taxon>Rhodymeniophycidae</taxon>
        <taxon>Gracilariales</taxon>
        <taxon>Gracilariaceae</taxon>
        <taxon>Gracilaria</taxon>
        <taxon>Gracilaria tenuistipitata</taxon>
    </lineage>
</organism>
<protein>
    <recommendedName>
        <fullName evidence="1">Photosystem II reaction center Psb28 protein</fullName>
    </recommendedName>
    <alternativeName>
        <fullName evidence="1">Photosystem II 13 kDa protein</fullName>
    </alternativeName>
    <alternativeName>
        <fullName evidence="1">Photosystem II reaction center W protein</fullName>
    </alternativeName>
</protein>
<geneLocation type="chloroplast"/>
<gene>
    <name evidence="1" type="primary">psb28</name>
    <name evidence="1" type="synonym">psbW</name>
    <name type="ordered locus">Grc000057</name>
</gene>
<name>PSB28_GRATL</name>
<comment type="subunit">
    <text evidence="1">Part of the photosystem II complex.</text>
</comment>
<comment type="subcellular location">
    <subcellularLocation>
        <location evidence="1">Plastid</location>
        <location evidence="1">Chloroplast thylakoid membrane</location>
        <topology evidence="1">Peripheral membrane protein</topology>
        <orientation evidence="1">Stromal side</orientation>
    </subcellularLocation>
</comment>
<comment type="similarity">
    <text evidence="1">Belongs to the Psb28 family.</text>
</comment>